<accession>Q8FKC6</accession>
<dbReference type="EC" id="3.1.4.14" evidence="1"/>
<dbReference type="EMBL" id="AE014075">
    <property type="protein sequence ID" value="AAN78992.1"/>
    <property type="status" value="ALT_INIT"/>
    <property type="molecule type" value="Genomic_DNA"/>
</dbReference>
<dbReference type="RefSeq" id="WP_001009873.1">
    <property type="nucleotide sequence ID" value="NZ_CP051263.1"/>
</dbReference>
<dbReference type="SMR" id="Q8FKC6"/>
<dbReference type="STRING" id="199310.c0514"/>
<dbReference type="KEGG" id="ecc:c0514"/>
<dbReference type="eggNOG" id="COG3124">
    <property type="taxonomic scope" value="Bacteria"/>
</dbReference>
<dbReference type="HOGENOM" id="CLU_099370_1_0_6"/>
<dbReference type="Proteomes" id="UP000001410">
    <property type="component" value="Chromosome"/>
</dbReference>
<dbReference type="GO" id="GO:0008770">
    <property type="term" value="F:[acyl-carrier-protein] phosphodiesterase activity"/>
    <property type="evidence" value="ECO:0007669"/>
    <property type="project" value="UniProtKB-UniRule"/>
</dbReference>
<dbReference type="GO" id="GO:0006633">
    <property type="term" value="P:fatty acid biosynthetic process"/>
    <property type="evidence" value="ECO:0007669"/>
    <property type="project" value="UniProtKB-UniRule"/>
</dbReference>
<dbReference type="HAMAP" id="MF_01950">
    <property type="entry name" value="AcpH"/>
    <property type="match status" value="1"/>
</dbReference>
<dbReference type="InterPro" id="IPR007431">
    <property type="entry name" value="ACP_PD"/>
</dbReference>
<dbReference type="InterPro" id="IPR023491">
    <property type="entry name" value="ACP_phosphodiesterase_gpbac"/>
</dbReference>
<dbReference type="NCBIfam" id="NF007466">
    <property type="entry name" value="PRK10045.1"/>
    <property type="match status" value="1"/>
</dbReference>
<dbReference type="PANTHER" id="PTHR38764">
    <property type="entry name" value="ACYL CARRIER PROTEIN PHOSPHODIESTERASE"/>
    <property type="match status" value="1"/>
</dbReference>
<dbReference type="PANTHER" id="PTHR38764:SF1">
    <property type="entry name" value="ACYL CARRIER PROTEIN PHOSPHODIESTERASE"/>
    <property type="match status" value="1"/>
</dbReference>
<dbReference type="Pfam" id="PF04336">
    <property type="entry name" value="ACP_PD"/>
    <property type="match status" value="1"/>
</dbReference>
<dbReference type="PIRSF" id="PIRSF011489">
    <property type="entry name" value="DUF479"/>
    <property type="match status" value="1"/>
</dbReference>
<protein>
    <recommendedName>
        <fullName evidence="1">Acyl carrier protein phosphodiesterase</fullName>
        <shortName evidence="1">ACP phosphodiesterase</shortName>
        <ecNumber evidence="1">3.1.4.14</ecNumber>
    </recommendedName>
</protein>
<name>ACPH_ECOL6</name>
<organism>
    <name type="scientific">Escherichia coli O6:H1 (strain CFT073 / ATCC 700928 / UPEC)</name>
    <dbReference type="NCBI Taxonomy" id="199310"/>
    <lineage>
        <taxon>Bacteria</taxon>
        <taxon>Pseudomonadati</taxon>
        <taxon>Pseudomonadota</taxon>
        <taxon>Gammaproteobacteria</taxon>
        <taxon>Enterobacterales</taxon>
        <taxon>Enterobacteriaceae</taxon>
        <taxon>Escherichia</taxon>
    </lineage>
</organism>
<proteinExistence type="inferred from homology"/>
<keyword id="KW-0275">Fatty acid biosynthesis</keyword>
<keyword id="KW-0276">Fatty acid metabolism</keyword>
<keyword id="KW-0378">Hydrolase</keyword>
<keyword id="KW-0444">Lipid biosynthesis</keyword>
<keyword id="KW-0443">Lipid metabolism</keyword>
<keyword id="KW-1185">Reference proteome</keyword>
<comment type="function">
    <text evidence="1">Converts holo-ACP to apo-ACP by hydrolytic cleavage of the phosphopantetheine prosthetic group from ACP.</text>
</comment>
<comment type="catalytic activity">
    <reaction evidence="1">
        <text>holo-[ACP] + H2O = apo-[ACP] + (R)-4'-phosphopantetheine + H(+)</text>
        <dbReference type="Rhea" id="RHEA:20537"/>
        <dbReference type="Rhea" id="RHEA-COMP:9685"/>
        <dbReference type="Rhea" id="RHEA-COMP:9690"/>
        <dbReference type="ChEBI" id="CHEBI:15377"/>
        <dbReference type="ChEBI" id="CHEBI:15378"/>
        <dbReference type="ChEBI" id="CHEBI:29999"/>
        <dbReference type="ChEBI" id="CHEBI:61723"/>
        <dbReference type="ChEBI" id="CHEBI:64479"/>
        <dbReference type="EC" id="3.1.4.14"/>
    </reaction>
</comment>
<comment type="similarity">
    <text evidence="1">Belongs to the AcpH family.</text>
</comment>
<comment type="sequence caution" evidence="2">
    <conflict type="erroneous initiation">
        <sequence resource="EMBL-CDS" id="AAN78992"/>
    </conflict>
</comment>
<feature type="chain" id="PRO_0000226267" description="Acyl carrier protein phosphodiesterase">
    <location>
        <begin position="1"/>
        <end position="193"/>
    </location>
</feature>
<gene>
    <name evidence="1" type="primary">acpH</name>
    <name type="ordered locus">c0514</name>
</gene>
<evidence type="ECO:0000255" key="1">
    <source>
        <dbReference type="HAMAP-Rule" id="MF_01950"/>
    </source>
</evidence>
<evidence type="ECO:0000305" key="2"/>
<reference key="1">
    <citation type="journal article" date="2002" name="Proc. Natl. Acad. Sci. U.S.A.">
        <title>Extensive mosaic structure revealed by the complete genome sequence of uropathogenic Escherichia coli.</title>
        <authorList>
            <person name="Welch R.A."/>
            <person name="Burland V."/>
            <person name="Plunkett G. III"/>
            <person name="Redford P."/>
            <person name="Roesch P."/>
            <person name="Rasko D."/>
            <person name="Buckles E.L."/>
            <person name="Liou S.-R."/>
            <person name="Boutin A."/>
            <person name="Hackett J."/>
            <person name="Stroud D."/>
            <person name="Mayhew G.F."/>
            <person name="Rose D.J."/>
            <person name="Zhou S."/>
            <person name="Schwartz D.C."/>
            <person name="Perna N.T."/>
            <person name="Mobley H.L.T."/>
            <person name="Donnenberg M.S."/>
            <person name="Blattner F.R."/>
        </authorList>
    </citation>
    <scope>NUCLEOTIDE SEQUENCE [LARGE SCALE GENOMIC DNA]</scope>
    <source>
        <strain>CFT073 / ATCC 700928 / UPEC</strain>
    </source>
</reference>
<sequence length="193" mass="23052">MNFLAHLHLAHLAESSLSGNLLADFVRGNPEESFPPDVVAGIHMHRRIDVLTDNLPEVREAREWFRNETRRVAPITLDVMWDHFLSRHWSQLSPDFPLQEFTCYAREQVMTILPDSPQRFINLNNYLWSEQWLVRYRDMDFIQSVLNGMASRRPRLDALRDSWYDLDAHYDALETRFWQFYPRMMEQASRKAL</sequence>